<accession>Q736W4</accession>
<reference key="1">
    <citation type="journal article" date="2004" name="Nucleic Acids Res.">
        <title>The genome sequence of Bacillus cereus ATCC 10987 reveals metabolic adaptations and a large plasmid related to Bacillus anthracis pXO1.</title>
        <authorList>
            <person name="Rasko D.A."/>
            <person name="Ravel J."/>
            <person name="Oekstad O.A."/>
            <person name="Helgason E."/>
            <person name="Cer R.Z."/>
            <person name="Jiang L."/>
            <person name="Shores K.A."/>
            <person name="Fouts D.E."/>
            <person name="Tourasse N.J."/>
            <person name="Angiuoli S.V."/>
            <person name="Kolonay J.F."/>
            <person name="Nelson W.C."/>
            <person name="Kolstoe A.-B."/>
            <person name="Fraser C.M."/>
            <person name="Read T.D."/>
        </authorList>
    </citation>
    <scope>NUCLEOTIDE SEQUENCE [LARGE SCALE GENOMIC DNA]</scope>
    <source>
        <strain>ATCC 10987 / NRS 248</strain>
    </source>
</reference>
<feature type="chain" id="PRO_0000362089" description="Kynurenine formamidase">
    <location>
        <begin position="1"/>
        <end position="209"/>
    </location>
</feature>
<feature type="active site" description="Proton donor/acceptor" evidence="1">
    <location>
        <position position="60"/>
    </location>
</feature>
<feature type="binding site" evidence="1">
    <location>
        <position position="20"/>
    </location>
    <ligand>
        <name>substrate</name>
    </ligand>
</feature>
<feature type="binding site" evidence="1">
    <location>
        <position position="50"/>
    </location>
    <ligand>
        <name>Zn(2+)</name>
        <dbReference type="ChEBI" id="CHEBI:29105"/>
        <label>1</label>
    </ligand>
</feature>
<feature type="binding site" evidence="1">
    <location>
        <position position="54"/>
    </location>
    <ligand>
        <name>Zn(2+)</name>
        <dbReference type="ChEBI" id="CHEBI:29105"/>
        <label>1</label>
    </ligand>
</feature>
<feature type="binding site" evidence="1">
    <location>
        <position position="56"/>
    </location>
    <ligand>
        <name>Zn(2+)</name>
        <dbReference type="ChEBI" id="CHEBI:29105"/>
        <label>1</label>
    </ligand>
</feature>
<feature type="binding site" evidence="1">
    <location>
        <position position="56"/>
    </location>
    <ligand>
        <name>Zn(2+)</name>
        <dbReference type="ChEBI" id="CHEBI:29105"/>
        <label>2</label>
    </ligand>
</feature>
<feature type="binding site" evidence="1">
    <location>
        <position position="161"/>
    </location>
    <ligand>
        <name>Zn(2+)</name>
        <dbReference type="ChEBI" id="CHEBI:29105"/>
        <label>2</label>
    </ligand>
</feature>
<feature type="binding site" evidence="1">
    <location>
        <position position="173"/>
    </location>
    <ligand>
        <name>Zn(2+)</name>
        <dbReference type="ChEBI" id="CHEBI:29105"/>
        <label>1</label>
    </ligand>
</feature>
<feature type="binding site" evidence="1">
    <location>
        <position position="173"/>
    </location>
    <ligand>
        <name>Zn(2+)</name>
        <dbReference type="ChEBI" id="CHEBI:29105"/>
        <label>2</label>
    </ligand>
</feature>
<keyword id="KW-0378">Hydrolase</keyword>
<keyword id="KW-0479">Metal-binding</keyword>
<keyword id="KW-0823">Tryptophan catabolism</keyword>
<keyword id="KW-0862">Zinc</keyword>
<name>KYNB_BACC1</name>
<organism>
    <name type="scientific">Bacillus cereus (strain ATCC 10987 / NRS 248)</name>
    <dbReference type="NCBI Taxonomy" id="222523"/>
    <lineage>
        <taxon>Bacteria</taxon>
        <taxon>Bacillati</taxon>
        <taxon>Bacillota</taxon>
        <taxon>Bacilli</taxon>
        <taxon>Bacillales</taxon>
        <taxon>Bacillaceae</taxon>
        <taxon>Bacillus</taxon>
        <taxon>Bacillus cereus group</taxon>
    </lineage>
</organism>
<dbReference type="EC" id="3.5.1.9" evidence="1"/>
<dbReference type="EMBL" id="AE017194">
    <property type="protein sequence ID" value="AAS41698.1"/>
    <property type="molecule type" value="Genomic_DNA"/>
</dbReference>
<dbReference type="SMR" id="Q736W4"/>
<dbReference type="KEGG" id="bca:BCE_2786"/>
<dbReference type="HOGENOM" id="CLU_030671_3_1_9"/>
<dbReference type="UniPathway" id="UPA00333">
    <property type="reaction ID" value="UER00454"/>
</dbReference>
<dbReference type="Proteomes" id="UP000002527">
    <property type="component" value="Chromosome"/>
</dbReference>
<dbReference type="GO" id="GO:0004061">
    <property type="term" value="F:arylformamidase activity"/>
    <property type="evidence" value="ECO:0000250"/>
    <property type="project" value="UniProtKB"/>
</dbReference>
<dbReference type="GO" id="GO:0004328">
    <property type="term" value="F:formamidase activity"/>
    <property type="evidence" value="ECO:0007669"/>
    <property type="project" value="InterPro"/>
</dbReference>
<dbReference type="GO" id="GO:0008270">
    <property type="term" value="F:zinc ion binding"/>
    <property type="evidence" value="ECO:0007669"/>
    <property type="project" value="UniProtKB-UniRule"/>
</dbReference>
<dbReference type="GO" id="GO:0043420">
    <property type="term" value="P:anthranilate metabolic process"/>
    <property type="evidence" value="ECO:0000250"/>
    <property type="project" value="UniProtKB"/>
</dbReference>
<dbReference type="GO" id="GO:0019441">
    <property type="term" value="P:L-tryptophan catabolic process to kynurenine"/>
    <property type="evidence" value="ECO:0000250"/>
    <property type="project" value="UniProtKB"/>
</dbReference>
<dbReference type="FunFam" id="3.50.30.50:FF:000001">
    <property type="entry name" value="Kynurenine formamidase"/>
    <property type="match status" value="1"/>
</dbReference>
<dbReference type="Gene3D" id="3.50.30.50">
    <property type="entry name" value="Putative cyclase"/>
    <property type="match status" value="1"/>
</dbReference>
<dbReference type="HAMAP" id="MF_01969">
    <property type="entry name" value="KynB"/>
    <property type="match status" value="1"/>
</dbReference>
<dbReference type="InterPro" id="IPR007325">
    <property type="entry name" value="KFase/CYL"/>
</dbReference>
<dbReference type="InterPro" id="IPR037175">
    <property type="entry name" value="KFase_sf"/>
</dbReference>
<dbReference type="InterPro" id="IPR017484">
    <property type="entry name" value="Kynurenine_formamidase_bac"/>
</dbReference>
<dbReference type="NCBIfam" id="TIGR03035">
    <property type="entry name" value="trp_arylform"/>
    <property type="match status" value="1"/>
</dbReference>
<dbReference type="PANTHER" id="PTHR31118">
    <property type="entry name" value="CYCLASE-LIKE PROTEIN 2"/>
    <property type="match status" value="1"/>
</dbReference>
<dbReference type="PANTHER" id="PTHR31118:SF32">
    <property type="entry name" value="KYNURENINE FORMAMIDASE"/>
    <property type="match status" value="1"/>
</dbReference>
<dbReference type="Pfam" id="PF04199">
    <property type="entry name" value="Cyclase"/>
    <property type="match status" value="1"/>
</dbReference>
<dbReference type="SUPFAM" id="SSF102198">
    <property type="entry name" value="Putative cyclase"/>
    <property type="match status" value="1"/>
</dbReference>
<gene>
    <name evidence="1" type="primary">kynB</name>
    <name type="ordered locus">BCE_2786</name>
</gene>
<comment type="function">
    <text evidence="1">Catalyzes the hydrolysis of N-formyl-L-kynurenine to L-kynurenine, the second step in the kynurenine pathway of tryptophan degradation.</text>
</comment>
<comment type="catalytic activity">
    <reaction evidence="1">
        <text>N-formyl-L-kynurenine + H2O = L-kynurenine + formate + H(+)</text>
        <dbReference type="Rhea" id="RHEA:13009"/>
        <dbReference type="ChEBI" id="CHEBI:15377"/>
        <dbReference type="ChEBI" id="CHEBI:15378"/>
        <dbReference type="ChEBI" id="CHEBI:15740"/>
        <dbReference type="ChEBI" id="CHEBI:57959"/>
        <dbReference type="ChEBI" id="CHEBI:58629"/>
        <dbReference type="EC" id="3.5.1.9"/>
    </reaction>
</comment>
<comment type="cofactor">
    <cofactor evidence="1">
        <name>Zn(2+)</name>
        <dbReference type="ChEBI" id="CHEBI:29105"/>
    </cofactor>
    <text evidence="1">Binds 2 zinc ions per subunit.</text>
</comment>
<comment type="pathway">
    <text evidence="1">Amino-acid degradation; L-tryptophan degradation via kynurenine pathway; L-kynurenine from L-tryptophan: step 2/2.</text>
</comment>
<comment type="subunit">
    <text evidence="1">Homodimer.</text>
</comment>
<comment type="similarity">
    <text evidence="1">Belongs to the Cyclase 1 superfamily. KynB family.</text>
</comment>
<proteinExistence type="inferred from homology"/>
<evidence type="ECO:0000255" key="1">
    <source>
        <dbReference type="HAMAP-Rule" id="MF_01969"/>
    </source>
</evidence>
<sequence length="209" mass="23185">MKTSEWIDISQPLNNDIATWPGDTPFSYEVSWPKEESGSVNVGKLTMSIHTGTHIDAPFHFDNEGKKVIDLDIQVYVGPVRIIDVSNLESIGKKELENFNLEGVERLLLRTSSHGKVNEFPDVIPHLHADIAPFLSEKGIRLIGVDVPSVDPLDDKELEAHHQLFKHGIHILENVVLDHVADGDYELIALPLALTDADGSPVRAVIRPI</sequence>
<protein>
    <recommendedName>
        <fullName evidence="1">Kynurenine formamidase</fullName>
        <shortName evidence="1">KFA</shortName>
        <shortName evidence="1">KFase</shortName>
        <ecNumber evidence="1">3.5.1.9</ecNumber>
    </recommendedName>
    <alternativeName>
        <fullName evidence="1">Arylformamidase</fullName>
    </alternativeName>
    <alternativeName>
        <fullName evidence="1">N-formylkynurenine formamidase</fullName>
        <shortName evidence="1">FKF</shortName>
    </alternativeName>
</protein>